<organism>
    <name type="scientific">Escherichia fergusonii (strain ATCC 35469 / DSM 13698 / CCUG 18766 / IAM 14443 / JCM 21226 / LMG 7866 / NBRC 102419 / NCTC 12128 / CDC 0568-73)</name>
    <dbReference type="NCBI Taxonomy" id="585054"/>
    <lineage>
        <taxon>Bacteria</taxon>
        <taxon>Pseudomonadati</taxon>
        <taxon>Pseudomonadota</taxon>
        <taxon>Gammaproteobacteria</taxon>
        <taxon>Enterobacterales</taxon>
        <taxon>Enterobacteriaceae</taxon>
        <taxon>Escherichia</taxon>
    </lineage>
</organism>
<feature type="chain" id="PRO_1000186196" description="Purine nucleoside phosphorylase DeoD-type">
    <location>
        <begin position="1"/>
        <end position="239"/>
    </location>
</feature>
<feature type="active site" description="Proton donor" evidence="2">
    <location>
        <position position="205"/>
    </location>
</feature>
<feature type="binding site" evidence="1">
    <location>
        <position position="5"/>
    </location>
    <ligand>
        <name>a purine D-ribonucleoside</name>
        <dbReference type="ChEBI" id="CHEBI:142355"/>
        <note>ligand shared between dimeric partners</note>
    </ligand>
</feature>
<feature type="binding site" description="in other chain" evidence="1">
    <location>
        <position position="21"/>
    </location>
    <ligand>
        <name>phosphate</name>
        <dbReference type="ChEBI" id="CHEBI:43474"/>
        <note>ligand shared between dimeric partners</note>
    </ligand>
</feature>
<feature type="binding site" description="in other chain" evidence="1">
    <location>
        <position position="25"/>
    </location>
    <ligand>
        <name>phosphate</name>
        <dbReference type="ChEBI" id="CHEBI:43474"/>
        <note>ligand shared between dimeric partners</note>
    </ligand>
</feature>
<feature type="binding site" evidence="1">
    <location>
        <position position="44"/>
    </location>
    <ligand>
        <name>phosphate</name>
        <dbReference type="ChEBI" id="CHEBI:43474"/>
        <note>ligand shared between dimeric partners</note>
    </ligand>
</feature>
<feature type="binding site" description="in other chain" evidence="1">
    <location>
        <begin position="88"/>
        <end position="91"/>
    </location>
    <ligand>
        <name>phosphate</name>
        <dbReference type="ChEBI" id="CHEBI:43474"/>
        <note>ligand shared between dimeric partners</note>
    </ligand>
</feature>
<feature type="binding site" description="in other chain" evidence="1">
    <location>
        <begin position="180"/>
        <end position="182"/>
    </location>
    <ligand>
        <name>a purine D-ribonucleoside</name>
        <dbReference type="ChEBI" id="CHEBI:142355"/>
        <note>ligand shared between dimeric partners</note>
    </ligand>
</feature>
<feature type="binding site" description="in other chain" evidence="1">
    <location>
        <begin position="204"/>
        <end position="205"/>
    </location>
    <ligand>
        <name>a purine D-ribonucleoside</name>
        <dbReference type="ChEBI" id="CHEBI:142355"/>
        <note>ligand shared between dimeric partners</note>
    </ligand>
</feature>
<feature type="site" description="Important for catalytic activity" evidence="2">
    <location>
        <position position="218"/>
    </location>
</feature>
<feature type="modified residue" description="N6-acetyllysine" evidence="2">
    <location>
        <position position="27"/>
    </location>
</feature>
<sequence>MATPHINAEMGDFADVVLMPGDPLRAKYIAETFLEDAREVNNVRGMLGFTGTYKGRKISVMGHGMGIPSCSIYTKELITDFGVKKIIRVGSCGAVLPHVKLRDVVIGMGACTDSKVNRIRFKDHDFAAIADFDMVRNAVDAAKALGIDARVGNLFSADLFYSPDGEMFDVMEKYGILGVEMEAAGIYGVAAEFGAKALTICTVSDHIRTHEQTTAAERQTTFNDMIKIALESVLLGDKE</sequence>
<comment type="function">
    <text evidence="2">Catalyzes the reversible phosphorolytic breakdown of the N-glycosidic bond in the beta-(deoxy)ribonucleoside molecules, with the formation of the corresponding free purine bases and pentose-1-phosphate.</text>
</comment>
<comment type="catalytic activity">
    <reaction evidence="2">
        <text>a purine D-ribonucleoside + phosphate = a purine nucleobase + alpha-D-ribose 1-phosphate</text>
        <dbReference type="Rhea" id="RHEA:19805"/>
        <dbReference type="ChEBI" id="CHEBI:26386"/>
        <dbReference type="ChEBI" id="CHEBI:43474"/>
        <dbReference type="ChEBI" id="CHEBI:57720"/>
        <dbReference type="ChEBI" id="CHEBI:142355"/>
        <dbReference type="EC" id="2.4.2.1"/>
    </reaction>
</comment>
<comment type="catalytic activity">
    <reaction evidence="2">
        <text>a purine 2'-deoxy-D-ribonucleoside + phosphate = a purine nucleobase + 2-deoxy-alpha-D-ribose 1-phosphate</text>
        <dbReference type="Rhea" id="RHEA:36431"/>
        <dbReference type="ChEBI" id="CHEBI:26386"/>
        <dbReference type="ChEBI" id="CHEBI:43474"/>
        <dbReference type="ChEBI" id="CHEBI:57259"/>
        <dbReference type="ChEBI" id="CHEBI:142361"/>
        <dbReference type="EC" id="2.4.2.1"/>
    </reaction>
</comment>
<comment type="subunit">
    <text evidence="2">Homohexamer; trimer of homodimers.</text>
</comment>
<comment type="similarity">
    <text evidence="2">Belongs to the PNP/UDP phosphorylase family.</text>
</comment>
<evidence type="ECO:0000250" key="1">
    <source>
        <dbReference type="UniProtKB" id="P50389"/>
    </source>
</evidence>
<evidence type="ECO:0000255" key="2">
    <source>
        <dbReference type="HAMAP-Rule" id="MF_01627"/>
    </source>
</evidence>
<protein>
    <recommendedName>
        <fullName evidence="2">Purine nucleoside phosphorylase DeoD-type</fullName>
        <shortName evidence="2">PNP</shortName>
        <ecNumber evidence="2">2.4.2.1</ecNumber>
    </recommendedName>
</protein>
<proteinExistence type="inferred from homology"/>
<keyword id="KW-0007">Acetylation</keyword>
<keyword id="KW-0328">Glycosyltransferase</keyword>
<keyword id="KW-0808">Transferase</keyword>
<accession>B7LNS4</accession>
<gene>
    <name evidence="2" type="primary">deoD</name>
    <name type="ordered locus">EFER_4481</name>
</gene>
<dbReference type="EC" id="2.4.2.1" evidence="2"/>
<dbReference type="EMBL" id="CU928158">
    <property type="protein sequence ID" value="CAQ91894.1"/>
    <property type="molecule type" value="Genomic_DNA"/>
</dbReference>
<dbReference type="RefSeq" id="WP_000224877.1">
    <property type="nucleotide sequence ID" value="NC_011740.1"/>
</dbReference>
<dbReference type="SMR" id="B7LNS4"/>
<dbReference type="GeneID" id="93777460"/>
<dbReference type="KEGG" id="efe:EFER_4481"/>
<dbReference type="HOGENOM" id="CLU_068457_2_0_6"/>
<dbReference type="OrthoDB" id="9782889at2"/>
<dbReference type="Proteomes" id="UP000000745">
    <property type="component" value="Chromosome"/>
</dbReference>
<dbReference type="GO" id="GO:0005829">
    <property type="term" value="C:cytosol"/>
    <property type="evidence" value="ECO:0007669"/>
    <property type="project" value="TreeGrafter"/>
</dbReference>
<dbReference type="GO" id="GO:0004731">
    <property type="term" value="F:purine-nucleoside phosphorylase activity"/>
    <property type="evidence" value="ECO:0007669"/>
    <property type="project" value="UniProtKB-UniRule"/>
</dbReference>
<dbReference type="GO" id="GO:0006152">
    <property type="term" value="P:purine nucleoside catabolic process"/>
    <property type="evidence" value="ECO:0007669"/>
    <property type="project" value="TreeGrafter"/>
</dbReference>
<dbReference type="CDD" id="cd09006">
    <property type="entry name" value="PNP_EcPNPI-like"/>
    <property type="match status" value="1"/>
</dbReference>
<dbReference type="FunFam" id="3.40.50.1580:FF:000002">
    <property type="entry name" value="Purine nucleoside phosphorylase DeoD-type"/>
    <property type="match status" value="1"/>
</dbReference>
<dbReference type="Gene3D" id="3.40.50.1580">
    <property type="entry name" value="Nucleoside phosphorylase domain"/>
    <property type="match status" value="1"/>
</dbReference>
<dbReference type="HAMAP" id="MF_01627">
    <property type="entry name" value="Pur_nucleosid_phosp"/>
    <property type="match status" value="1"/>
</dbReference>
<dbReference type="InterPro" id="IPR004402">
    <property type="entry name" value="DeoD-type"/>
</dbReference>
<dbReference type="InterPro" id="IPR018016">
    <property type="entry name" value="Nucleoside_phosphorylase_CS"/>
</dbReference>
<dbReference type="InterPro" id="IPR000845">
    <property type="entry name" value="Nucleoside_phosphorylase_d"/>
</dbReference>
<dbReference type="InterPro" id="IPR035994">
    <property type="entry name" value="Nucleoside_phosphorylase_sf"/>
</dbReference>
<dbReference type="NCBIfam" id="TIGR00107">
    <property type="entry name" value="deoD"/>
    <property type="match status" value="1"/>
</dbReference>
<dbReference type="NCBIfam" id="NF004489">
    <property type="entry name" value="PRK05819.1"/>
    <property type="match status" value="1"/>
</dbReference>
<dbReference type="NCBIfam" id="NF009914">
    <property type="entry name" value="PRK13374.1"/>
    <property type="match status" value="1"/>
</dbReference>
<dbReference type="PANTHER" id="PTHR43691:SF2">
    <property type="entry name" value="PURINE NUCLEOSIDE PHOSPHORYLASE DEOD-TYPE"/>
    <property type="match status" value="1"/>
</dbReference>
<dbReference type="PANTHER" id="PTHR43691">
    <property type="entry name" value="URIDINE PHOSPHORYLASE"/>
    <property type="match status" value="1"/>
</dbReference>
<dbReference type="Pfam" id="PF01048">
    <property type="entry name" value="PNP_UDP_1"/>
    <property type="match status" value="1"/>
</dbReference>
<dbReference type="SUPFAM" id="SSF53167">
    <property type="entry name" value="Purine and uridine phosphorylases"/>
    <property type="match status" value="1"/>
</dbReference>
<dbReference type="PROSITE" id="PS01232">
    <property type="entry name" value="PNP_UDP_1"/>
    <property type="match status" value="1"/>
</dbReference>
<name>DEOD_ESCF3</name>
<reference key="1">
    <citation type="journal article" date="2009" name="PLoS Genet.">
        <title>Organised genome dynamics in the Escherichia coli species results in highly diverse adaptive paths.</title>
        <authorList>
            <person name="Touchon M."/>
            <person name="Hoede C."/>
            <person name="Tenaillon O."/>
            <person name="Barbe V."/>
            <person name="Baeriswyl S."/>
            <person name="Bidet P."/>
            <person name="Bingen E."/>
            <person name="Bonacorsi S."/>
            <person name="Bouchier C."/>
            <person name="Bouvet O."/>
            <person name="Calteau A."/>
            <person name="Chiapello H."/>
            <person name="Clermont O."/>
            <person name="Cruveiller S."/>
            <person name="Danchin A."/>
            <person name="Diard M."/>
            <person name="Dossat C."/>
            <person name="Karoui M.E."/>
            <person name="Frapy E."/>
            <person name="Garry L."/>
            <person name="Ghigo J.M."/>
            <person name="Gilles A.M."/>
            <person name="Johnson J."/>
            <person name="Le Bouguenec C."/>
            <person name="Lescat M."/>
            <person name="Mangenot S."/>
            <person name="Martinez-Jehanne V."/>
            <person name="Matic I."/>
            <person name="Nassif X."/>
            <person name="Oztas S."/>
            <person name="Petit M.A."/>
            <person name="Pichon C."/>
            <person name="Rouy Z."/>
            <person name="Ruf C.S."/>
            <person name="Schneider D."/>
            <person name="Tourret J."/>
            <person name="Vacherie B."/>
            <person name="Vallenet D."/>
            <person name="Medigue C."/>
            <person name="Rocha E.P.C."/>
            <person name="Denamur E."/>
        </authorList>
    </citation>
    <scope>NUCLEOTIDE SEQUENCE [LARGE SCALE GENOMIC DNA]</scope>
    <source>
        <strain>ATCC 35469 / DSM 13698 / BCRC 15582 / CCUG 18766 / IAM 14443 / JCM 21226 / LMG 7866 / NBRC 102419 / NCTC 12128 / CDC 0568-73</strain>
    </source>
</reference>